<sequence length="9" mass="1011">TPTAFYGVR</sequence>
<evidence type="ECO:0000250" key="1">
    <source>
        <dbReference type="UniProtKB" id="P41517"/>
    </source>
</evidence>
<evidence type="ECO:0000269" key="2">
    <source>
    </source>
</evidence>
<evidence type="ECO:0000303" key="3">
    <source>
    </source>
</evidence>
<evidence type="ECO:0000305" key="4"/>
<protein>
    <recommendedName>
        <fullName evidence="3">Tachykinin-related peptide TPTAFYGVR-amide</fullName>
    </recommendedName>
</protein>
<proteinExistence type="evidence at protein level"/>
<keyword id="KW-0027">Amidation</keyword>
<keyword id="KW-0903">Direct protein sequencing</keyword>
<keyword id="KW-0527">Neuropeptide</keyword>
<keyword id="KW-0964">Secreted</keyword>
<comment type="function">
    <text evidence="1">Myoactive peptide.</text>
</comment>
<comment type="subcellular location">
    <subcellularLocation>
        <location evidence="1">Secreted</location>
    </subcellularLocation>
</comment>
<comment type="tissue specificity">
    <text evidence="2">Expressed in the CNS and midgut but not in the ring gland, thoracic perisympathetic organs (tPSO) and abdominal perisympathetic organs (aPSO) (at protein level).</text>
</comment>
<comment type="developmental stage">
    <text evidence="2">Detected in larvae.</text>
</comment>
<comment type="mass spectrometry" mass="1010.55" method="MALDI" evidence="2"/>
<name>TRP1_DELRA</name>
<dbReference type="GO" id="GO:0005576">
    <property type="term" value="C:extracellular region"/>
    <property type="evidence" value="ECO:0007669"/>
    <property type="project" value="UniProtKB-SubCell"/>
</dbReference>
<dbReference type="GO" id="GO:0007218">
    <property type="term" value="P:neuropeptide signaling pathway"/>
    <property type="evidence" value="ECO:0007669"/>
    <property type="project" value="UniProtKB-KW"/>
</dbReference>
<accession>B3EWM5</accession>
<feature type="peptide" id="PRO_0000419725" description="Tachykinin-related peptide TPTAFYGVR-amide" evidence="2">
    <location>
        <begin position="1"/>
        <end position="9"/>
    </location>
</feature>
<feature type="modified residue" description="Arginine amide" evidence="2">
    <location>
        <position position="9"/>
    </location>
</feature>
<organism>
    <name type="scientific">Delia radicum</name>
    <name type="common">Cabbage root fly</name>
    <name type="synonym">Anthomyia brassicae</name>
    <dbReference type="NCBI Taxonomy" id="30064"/>
    <lineage>
        <taxon>Eukaryota</taxon>
        <taxon>Metazoa</taxon>
        <taxon>Ecdysozoa</taxon>
        <taxon>Arthropoda</taxon>
        <taxon>Hexapoda</taxon>
        <taxon>Insecta</taxon>
        <taxon>Pterygota</taxon>
        <taxon>Neoptera</taxon>
        <taxon>Endopterygota</taxon>
        <taxon>Diptera</taxon>
        <taxon>Brachycera</taxon>
        <taxon>Muscomorpha</taxon>
        <taxon>Muscoidea</taxon>
        <taxon>Anthomyiidae</taxon>
        <taxon>Anthomyiinae</taxon>
        <taxon>Delia</taxon>
    </lineage>
</organism>
<reference evidence="4" key="1">
    <citation type="journal article" date="2012" name="PLoS ONE">
        <title>Peptidomics of the agriculturally damaging larval stage of the cabbage root fly Delia radicum (Diptera: Anthomyiidae).</title>
        <authorList>
            <person name="Zoephel J."/>
            <person name="Reiher W."/>
            <person name="Rexer K.-H."/>
            <person name="Kahnt J."/>
            <person name="Wegener C."/>
        </authorList>
    </citation>
    <scope>PROTEIN SEQUENCE</scope>
    <scope>TISSUE SPECIFICITY</scope>
    <scope>DEVELOPMENTAL STAGE</scope>
    <scope>MASS SPECTROMETRY</scope>
    <scope>AMIDATION AT ARG-9</scope>
    <source>
        <tissue evidence="2">CNS</tissue>
        <tissue evidence="2">Midgut</tissue>
    </source>
</reference>